<organism>
    <name type="scientific">Bacteroides fragilis (strain ATCC 25285 / DSM 2151 / CCUG 4856 / JCM 11019 / LMG 10263 / NCTC 9343 / Onslow / VPI 2553 / EN-2)</name>
    <dbReference type="NCBI Taxonomy" id="272559"/>
    <lineage>
        <taxon>Bacteria</taxon>
        <taxon>Pseudomonadati</taxon>
        <taxon>Bacteroidota</taxon>
        <taxon>Bacteroidia</taxon>
        <taxon>Bacteroidales</taxon>
        <taxon>Bacteroidaceae</taxon>
        <taxon>Bacteroides</taxon>
    </lineage>
</organism>
<sequence>MKLKEILTSIQPVKITGNQDIEITGVDIDSRQVESGHLFMAMHGTQTDGHAYIPAAVEKGATAILCEELPAELAEGVTYIQVADSEDAVGKAATTFYGNPSSKLELVGVTGTNGKTTIATLLYNTFRYFGYKVGLISTVCNYIDDEAIPTEHTTPDPITLNRLLGRMADEGCKYVFMEVSSHSIAQKRISGLRFAGGIFTNLTRDHLDYHKTVENYLKAKKKFFDDMPKNSFSLTNLDDKNGLVMTQNTKSKVYTYSLRSLSDFKGRVLESHFEGMLLDFNNHELAVQFIGKFNASNLLAVFGAAVLLGKKEEDVLVALSTLHPVAGRFDAIRSPQGYTAIVDYAHTPDALVNVLNAIHGVLEGKGKVITVVGAGGNRDKGKRPIMAKEAARASDRVIITSDNPRFEEPQDIINDMLAGLDTEDKKKTLSIADRKEAIRTACMLAEKGDVILVAGKGHENYQDIKGVKHHFDDKEVLKEIFSLTV</sequence>
<keyword id="KW-0067">ATP-binding</keyword>
<keyword id="KW-0131">Cell cycle</keyword>
<keyword id="KW-0132">Cell division</keyword>
<keyword id="KW-0133">Cell shape</keyword>
<keyword id="KW-0961">Cell wall biogenesis/degradation</keyword>
<keyword id="KW-0963">Cytoplasm</keyword>
<keyword id="KW-0436">Ligase</keyword>
<keyword id="KW-0460">Magnesium</keyword>
<keyword id="KW-0547">Nucleotide-binding</keyword>
<keyword id="KW-0573">Peptidoglycan synthesis</keyword>
<name>MURE_BACFN</name>
<dbReference type="EC" id="6.3.2.13" evidence="1"/>
<dbReference type="EMBL" id="CR626927">
    <property type="protein sequence ID" value="CAH06033.1"/>
    <property type="molecule type" value="Genomic_DNA"/>
</dbReference>
<dbReference type="RefSeq" id="WP_010991957.1">
    <property type="nucleotide sequence ID" value="NZ_UFTH01000001.1"/>
</dbReference>
<dbReference type="SMR" id="Q5LIJ3"/>
<dbReference type="PaxDb" id="272559-BF9343_0254"/>
<dbReference type="KEGG" id="bfs:BF9343_0254"/>
<dbReference type="eggNOG" id="COG0769">
    <property type="taxonomic scope" value="Bacteria"/>
</dbReference>
<dbReference type="HOGENOM" id="CLU_022291_4_1_10"/>
<dbReference type="UniPathway" id="UPA00219"/>
<dbReference type="Proteomes" id="UP000006731">
    <property type="component" value="Chromosome"/>
</dbReference>
<dbReference type="GO" id="GO:0005737">
    <property type="term" value="C:cytoplasm"/>
    <property type="evidence" value="ECO:0007669"/>
    <property type="project" value="UniProtKB-SubCell"/>
</dbReference>
<dbReference type="GO" id="GO:0005524">
    <property type="term" value="F:ATP binding"/>
    <property type="evidence" value="ECO:0007669"/>
    <property type="project" value="UniProtKB-UniRule"/>
</dbReference>
<dbReference type="GO" id="GO:0000287">
    <property type="term" value="F:magnesium ion binding"/>
    <property type="evidence" value="ECO:0007669"/>
    <property type="project" value="UniProtKB-UniRule"/>
</dbReference>
<dbReference type="GO" id="GO:0008765">
    <property type="term" value="F:UDP-N-acetylmuramoylalanyl-D-glutamate-2,6-diaminopimelate ligase activity"/>
    <property type="evidence" value="ECO:0007669"/>
    <property type="project" value="UniProtKB-UniRule"/>
</dbReference>
<dbReference type="GO" id="GO:0051301">
    <property type="term" value="P:cell division"/>
    <property type="evidence" value="ECO:0007669"/>
    <property type="project" value="UniProtKB-KW"/>
</dbReference>
<dbReference type="GO" id="GO:0071555">
    <property type="term" value="P:cell wall organization"/>
    <property type="evidence" value="ECO:0007669"/>
    <property type="project" value="UniProtKB-KW"/>
</dbReference>
<dbReference type="GO" id="GO:0009252">
    <property type="term" value="P:peptidoglycan biosynthetic process"/>
    <property type="evidence" value="ECO:0007669"/>
    <property type="project" value="UniProtKB-UniRule"/>
</dbReference>
<dbReference type="GO" id="GO:0008360">
    <property type="term" value="P:regulation of cell shape"/>
    <property type="evidence" value="ECO:0007669"/>
    <property type="project" value="UniProtKB-KW"/>
</dbReference>
<dbReference type="Gene3D" id="3.90.190.20">
    <property type="entry name" value="Mur ligase, C-terminal domain"/>
    <property type="match status" value="1"/>
</dbReference>
<dbReference type="Gene3D" id="3.40.1190.10">
    <property type="entry name" value="Mur-like, catalytic domain"/>
    <property type="match status" value="1"/>
</dbReference>
<dbReference type="Gene3D" id="3.40.1390.10">
    <property type="entry name" value="MurE/MurF, N-terminal domain"/>
    <property type="match status" value="1"/>
</dbReference>
<dbReference type="HAMAP" id="MF_00208">
    <property type="entry name" value="MurE"/>
    <property type="match status" value="1"/>
</dbReference>
<dbReference type="InterPro" id="IPR036565">
    <property type="entry name" value="Mur-like_cat_sf"/>
</dbReference>
<dbReference type="InterPro" id="IPR004101">
    <property type="entry name" value="Mur_ligase_C"/>
</dbReference>
<dbReference type="InterPro" id="IPR036615">
    <property type="entry name" value="Mur_ligase_C_dom_sf"/>
</dbReference>
<dbReference type="InterPro" id="IPR013221">
    <property type="entry name" value="Mur_ligase_cen"/>
</dbReference>
<dbReference type="InterPro" id="IPR000713">
    <property type="entry name" value="Mur_ligase_N"/>
</dbReference>
<dbReference type="InterPro" id="IPR035911">
    <property type="entry name" value="MurE/MurF_N"/>
</dbReference>
<dbReference type="InterPro" id="IPR005761">
    <property type="entry name" value="UDP-N-AcMur-Glu-dNH2Pim_ligase"/>
</dbReference>
<dbReference type="NCBIfam" id="TIGR01085">
    <property type="entry name" value="murE"/>
    <property type="match status" value="1"/>
</dbReference>
<dbReference type="NCBIfam" id="NF001124">
    <property type="entry name" value="PRK00139.1-2"/>
    <property type="match status" value="1"/>
</dbReference>
<dbReference type="NCBIfam" id="NF001126">
    <property type="entry name" value="PRK00139.1-4"/>
    <property type="match status" value="1"/>
</dbReference>
<dbReference type="PANTHER" id="PTHR23135">
    <property type="entry name" value="MUR LIGASE FAMILY MEMBER"/>
    <property type="match status" value="1"/>
</dbReference>
<dbReference type="PANTHER" id="PTHR23135:SF4">
    <property type="entry name" value="UDP-N-ACETYLMURAMOYL-L-ALANYL-D-GLUTAMATE--2,6-DIAMINOPIMELATE LIGASE MURE HOMOLOG, CHLOROPLASTIC"/>
    <property type="match status" value="1"/>
</dbReference>
<dbReference type="Pfam" id="PF01225">
    <property type="entry name" value="Mur_ligase"/>
    <property type="match status" value="1"/>
</dbReference>
<dbReference type="Pfam" id="PF02875">
    <property type="entry name" value="Mur_ligase_C"/>
    <property type="match status" value="1"/>
</dbReference>
<dbReference type="Pfam" id="PF08245">
    <property type="entry name" value="Mur_ligase_M"/>
    <property type="match status" value="1"/>
</dbReference>
<dbReference type="SUPFAM" id="SSF53623">
    <property type="entry name" value="MurD-like peptide ligases, catalytic domain"/>
    <property type="match status" value="1"/>
</dbReference>
<dbReference type="SUPFAM" id="SSF53244">
    <property type="entry name" value="MurD-like peptide ligases, peptide-binding domain"/>
    <property type="match status" value="1"/>
</dbReference>
<dbReference type="SUPFAM" id="SSF63418">
    <property type="entry name" value="MurE/MurF N-terminal domain"/>
    <property type="match status" value="1"/>
</dbReference>
<accession>Q5LIJ3</accession>
<proteinExistence type="inferred from homology"/>
<comment type="function">
    <text evidence="1">Catalyzes the addition of meso-diaminopimelic acid to the nucleotide precursor UDP-N-acetylmuramoyl-L-alanyl-D-glutamate (UMAG) in the biosynthesis of bacterial cell-wall peptidoglycan.</text>
</comment>
<comment type="catalytic activity">
    <reaction evidence="1">
        <text>UDP-N-acetyl-alpha-D-muramoyl-L-alanyl-D-glutamate + meso-2,6-diaminopimelate + ATP = UDP-N-acetyl-alpha-D-muramoyl-L-alanyl-gamma-D-glutamyl-meso-2,6-diaminopimelate + ADP + phosphate + H(+)</text>
        <dbReference type="Rhea" id="RHEA:23676"/>
        <dbReference type="ChEBI" id="CHEBI:15378"/>
        <dbReference type="ChEBI" id="CHEBI:30616"/>
        <dbReference type="ChEBI" id="CHEBI:43474"/>
        <dbReference type="ChEBI" id="CHEBI:57791"/>
        <dbReference type="ChEBI" id="CHEBI:83900"/>
        <dbReference type="ChEBI" id="CHEBI:83905"/>
        <dbReference type="ChEBI" id="CHEBI:456216"/>
        <dbReference type="EC" id="6.3.2.13"/>
    </reaction>
</comment>
<comment type="cofactor">
    <cofactor evidence="1">
        <name>Mg(2+)</name>
        <dbReference type="ChEBI" id="CHEBI:18420"/>
    </cofactor>
</comment>
<comment type="pathway">
    <text evidence="1">Cell wall biogenesis; peptidoglycan biosynthesis.</text>
</comment>
<comment type="subcellular location">
    <subcellularLocation>
        <location evidence="1">Cytoplasm</location>
    </subcellularLocation>
</comment>
<comment type="PTM">
    <text evidence="1">Carboxylation is probably crucial for Mg(2+) binding and, consequently, for the gamma-phosphate positioning of ATP.</text>
</comment>
<comment type="similarity">
    <text evidence="1">Belongs to the MurCDEF family. MurE subfamily.</text>
</comment>
<gene>
    <name evidence="1" type="primary">murE</name>
    <name type="ordered locus">BF0258</name>
</gene>
<evidence type="ECO:0000255" key="1">
    <source>
        <dbReference type="HAMAP-Rule" id="MF_00208"/>
    </source>
</evidence>
<feature type="chain" id="PRO_1000012337" description="UDP-N-acetylmuramoyl-L-alanyl-D-glutamate--2,6-diaminopimelate ligase">
    <location>
        <begin position="1"/>
        <end position="485"/>
    </location>
</feature>
<feature type="short sequence motif" description="Meso-diaminopimelate recognition motif">
    <location>
        <begin position="402"/>
        <end position="405"/>
    </location>
</feature>
<feature type="binding site" evidence="1">
    <location>
        <position position="30"/>
    </location>
    <ligand>
        <name>UDP-N-acetyl-alpha-D-muramoyl-L-alanyl-D-glutamate</name>
        <dbReference type="ChEBI" id="CHEBI:83900"/>
    </ligand>
</feature>
<feature type="binding site" evidence="1">
    <location>
        <begin position="111"/>
        <end position="117"/>
    </location>
    <ligand>
        <name>ATP</name>
        <dbReference type="ChEBI" id="CHEBI:30616"/>
    </ligand>
</feature>
<feature type="binding site" evidence="1">
    <location>
        <begin position="153"/>
        <end position="154"/>
    </location>
    <ligand>
        <name>UDP-N-acetyl-alpha-D-muramoyl-L-alanyl-D-glutamate</name>
        <dbReference type="ChEBI" id="CHEBI:83900"/>
    </ligand>
</feature>
<feature type="binding site" evidence="1">
    <location>
        <position position="180"/>
    </location>
    <ligand>
        <name>UDP-N-acetyl-alpha-D-muramoyl-L-alanyl-D-glutamate</name>
        <dbReference type="ChEBI" id="CHEBI:83900"/>
    </ligand>
</feature>
<feature type="binding site" evidence="1">
    <location>
        <position position="186"/>
    </location>
    <ligand>
        <name>UDP-N-acetyl-alpha-D-muramoyl-L-alanyl-D-glutamate</name>
        <dbReference type="ChEBI" id="CHEBI:83900"/>
    </ligand>
</feature>
<feature type="binding site" evidence="1">
    <location>
        <position position="188"/>
    </location>
    <ligand>
        <name>UDP-N-acetyl-alpha-D-muramoyl-L-alanyl-D-glutamate</name>
        <dbReference type="ChEBI" id="CHEBI:83900"/>
    </ligand>
</feature>
<feature type="binding site" evidence="1">
    <location>
        <position position="378"/>
    </location>
    <ligand>
        <name>meso-2,6-diaminopimelate</name>
        <dbReference type="ChEBI" id="CHEBI:57791"/>
    </ligand>
</feature>
<feature type="binding site" evidence="1">
    <location>
        <begin position="402"/>
        <end position="405"/>
    </location>
    <ligand>
        <name>meso-2,6-diaminopimelate</name>
        <dbReference type="ChEBI" id="CHEBI:57791"/>
    </ligand>
</feature>
<feature type="binding site" evidence="1">
    <location>
        <position position="455"/>
    </location>
    <ligand>
        <name>meso-2,6-diaminopimelate</name>
        <dbReference type="ChEBI" id="CHEBI:57791"/>
    </ligand>
</feature>
<feature type="binding site" evidence="1">
    <location>
        <position position="459"/>
    </location>
    <ligand>
        <name>meso-2,6-diaminopimelate</name>
        <dbReference type="ChEBI" id="CHEBI:57791"/>
    </ligand>
</feature>
<feature type="modified residue" description="N6-carboxylysine" evidence="1">
    <location>
        <position position="220"/>
    </location>
</feature>
<reference key="1">
    <citation type="journal article" date="2005" name="Science">
        <title>Extensive DNA inversions in the B. fragilis genome control variable gene expression.</title>
        <authorList>
            <person name="Cerdeno-Tarraga A.-M."/>
            <person name="Patrick S."/>
            <person name="Crossman L.C."/>
            <person name="Blakely G."/>
            <person name="Abratt V."/>
            <person name="Lennard N."/>
            <person name="Poxton I."/>
            <person name="Duerden B."/>
            <person name="Harris B."/>
            <person name="Quail M.A."/>
            <person name="Barron A."/>
            <person name="Clark L."/>
            <person name="Corton C."/>
            <person name="Doggett J."/>
            <person name="Holden M.T.G."/>
            <person name="Larke N."/>
            <person name="Line A."/>
            <person name="Lord A."/>
            <person name="Norbertczak H."/>
            <person name="Ormond D."/>
            <person name="Price C."/>
            <person name="Rabbinowitsch E."/>
            <person name="Woodward J."/>
            <person name="Barrell B.G."/>
            <person name="Parkhill J."/>
        </authorList>
    </citation>
    <scope>NUCLEOTIDE SEQUENCE [LARGE SCALE GENOMIC DNA]</scope>
    <source>
        <strain>ATCC 25285 / DSM 2151 / CCUG 4856 / JCM 11019 / LMG 10263 / NCTC 9343 / Onslow / VPI 2553 / EN-2</strain>
    </source>
</reference>
<protein>
    <recommendedName>
        <fullName evidence="1">UDP-N-acetylmuramoyl-L-alanyl-D-glutamate--2,6-diaminopimelate ligase</fullName>
        <ecNumber evidence="1">6.3.2.13</ecNumber>
    </recommendedName>
    <alternativeName>
        <fullName evidence="1">Meso-A2pm-adding enzyme</fullName>
    </alternativeName>
    <alternativeName>
        <fullName evidence="1">Meso-diaminopimelate-adding enzyme</fullName>
    </alternativeName>
    <alternativeName>
        <fullName evidence="1">UDP-MurNAc-L-Ala-D-Glu:meso-diaminopimelate ligase</fullName>
    </alternativeName>
    <alternativeName>
        <fullName evidence="1">UDP-MurNAc-tripeptide synthetase</fullName>
    </alternativeName>
    <alternativeName>
        <fullName evidence="1">UDP-N-acetylmuramyl-tripeptide synthetase</fullName>
    </alternativeName>
</protein>